<evidence type="ECO:0000255" key="1">
    <source>
        <dbReference type="HAMAP-Rule" id="MF_00185"/>
    </source>
</evidence>
<name>MIAA_POLAQ</name>
<keyword id="KW-0067">ATP-binding</keyword>
<keyword id="KW-0460">Magnesium</keyword>
<keyword id="KW-0547">Nucleotide-binding</keyword>
<keyword id="KW-1185">Reference proteome</keyword>
<keyword id="KW-0808">Transferase</keyword>
<keyword id="KW-0819">tRNA processing</keyword>
<accession>A4SZQ9</accession>
<protein>
    <recommendedName>
        <fullName evidence="1">tRNA dimethylallyltransferase</fullName>
        <ecNumber evidence="1">2.5.1.75</ecNumber>
    </recommendedName>
    <alternativeName>
        <fullName evidence="1">Dimethylallyl diphosphate:tRNA dimethylallyltransferase</fullName>
        <shortName evidence="1">DMAPP:tRNA dimethylallyltransferase</shortName>
        <shortName evidence="1">DMATase</shortName>
    </alternativeName>
    <alternativeName>
        <fullName evidence="1">Isopentenyl-diphosphate:tRNA isopentenyltransferase</fullName>
        <shortName evidence="1">IPP transferase</shortName>
        <shortName evidence="1">IPPT</shortName>
        <shortName evidence="1">IPTase</shortName>
    </alternativeName>
</protein>
<reference key="1">
    <citation type="journal article" date="2012" name="Stand. Genomic Sci.">
        <title>Complete genome sequence of Polynucleobacter necessarius subsp. asymbioticus type strain (QLW-P1DMWA-1(T)).</title>
        <authorList>
            <person name="Meincke L."/>
            <person name="Copeland A."/>
            <person name="Lapidus A."/>
            <person name="Lucas S."/>
            <person name="Berry K.W."/>
            <person name="Del Rio T.G."/>
            <person name="Hammon N."/>
            <person name="Dalin E."/>
            <person name="Tice H."/>
            <person name="Pitluck S."/>
            <person name="Richardson P."/>
            <person name="Bruce D."/>
            <person name="Goodwin L."/>
            <person name="Han C."/>
            <person name="Tapia R."/>
            <person name="Detter J.C."/>
            <person name="Schmutz J."/>
            <person name="Brettin T."/>
            <person name="Larimer F."/>
            <person name="Land M."/>
            <person name="Hauser L."/>
            <person name="Kyrpides N.C."/>
            <person name="Ivanova N."/>
            <person name="Goker M."/>
            <person name="Woyke T."/>
            <person name="Wu Q.L."/>
            <person name="Pockl M."/>
            <person name="Hahn M.W."/>
            <person name="Klenk H.P."/>
        </authorList>
    </citation>
    <scope>NUCLEOTIDE SEQUENCE [LARGE SCALE GENOMIC DNA]</scope>
    <source>
        <strain>DSM 18221 / CIP 109841 / QLW-P1DMWA-1</strain>
    </source>
</reference>
<comment type="function">
    <text evidence="1">Catalyzes the transfer of a dimethylallyl group onto the adenine at position 37 in tRNAs that read codons beginning with uridine, leading to the formation of N6-(dimethylallyl)adenosine (i(6)A).</text>
</comment>
<comment type="catalytic activity">
    <reaction evidence="1">
        <text>adenosine(37) in tRNA + dimethylallyl diphosphate = N(6)-dimethylallyladenosine(37) in tRNA + diphosphate</text>
        <dbReference type="Rhea" id="RHEA:26482"/>
        <dbReference type="Rhea" id="RHEA-COMP:10162"/>
        <dbReference type="Rhea" id="RHEA-COMP:10375"/>
        <dbReference type="ChEBI" id="CHEBI:33019"/>
        <dbReference type="ChEBI" id="CHEBI:57623"/>
        <dbReference type="ChEBI" id="CHEBI:74411"/>
        <dbReference type="ChEBI" id="CHEBI:74415"/>
        <dbReference type="EC" id="2.5.1.75"/>
    </reaction>
</comment>
<comment type="cofactor">
    <cofactor evidence="1">
        <name>Mg(2+)</name>
        <dbReference type="ChEBI" id="CHEBI:18420"/>
    </cofactor>
</comment>
<comment type="subunit">
    <text evidence="1">Monomer.</text>
</comment>
<comment type="similarity">
    <text evidence="1">Belongs to the IPP transferase family.</text>
</comment>
<gene>
    <name evidence="1" type="primary">miaA</name>
    <name type="ordered locus">Pnuc_1760</name>
</gene>
<organism>
    <name type="scientific">Polynucleobacter asymbioticus (strain DSM 18221 / CIP 109841 / QLW-P1DMWA-1)</name>
    <name type="common">Polynucleobacter necessarius subsp. asymbioticus</name>
    <dbReference type="NCBI Taxonomy" id="312153"/>
    <lineage>
        <taxon>Bacteria</taxon>
        <taxon>Pseudomonadati</taxon>
        <taxon>Pseudomonadota</taxon>
        <taxon>Betaproteobacteria</taxon>
        <taxon>Burkholderiales</taxon>
        <taxon>Burkholderiaceae</taxon>
        <taxon>Polynucleobacter</taxon>
    </lineage>
</organism>
<feature type="chain" id="PRO_0000377265" description="tRNA dimethylallyltransferase">
    <location>
        <begin position="1"/>
        <end position="333"/>
    </location>
</feature>
<feature type="region of interest" description="Interaction with substrate tRNA" evidence="1">
    <location>
        <begin position="53"/>
        <end position="56"/>
    </location>
</feature>
<feature type="region of interest" description="Interaction with substrate tRNA" evidence="1">
    <location>
        <begin position="177"/>
        <end position="181"/>
    </location>
</feature>
<feature type="binding site" evidence="1">
    <location>
        <begin position="23"/>
        <end position="30"/>
    </location>
    <ligand>
        <name>ATP</name>
        <dbReference type="ChEBI" id="CHEBI:30616"/>
    </ligand>
</feature>
<feature type="binding site" evidence="1">
    <location>
        <begin position="25"/>
        <end position="30"/>
    </location>
    <ligand>
        <name>substrate</name>
    </ligand>
</feature>
<feature type="site" description="Interaction with substrate tRNA" evidence="1">
    <location>
        <position position="119"/>
    </location>
</feature>
<feature type="site" description="Interaction with substrate tRNA" evidence="1">
    <location>
        <position position="141"/>
    </location>
</feature>
<proteinExistence type="inferred from homology"/>
<sequence>MQTEPYIQPMQSPDFKPILCIVGPTGAGKTHLAMSLAEHAQSIGLTVELISMDSALVYRGLNIGSAKPSKEEQATVIHHLIDILEPTEVYSAARFAKDAKQLCEDIRSRGNIPVVVGGTMLYWRAWAHGLSSLPPANTDIRARLDEEGKSLGWPAMHTKLAQIDPETAARLKPNDSQRVQRALEVFEITGKPMSALLAESPSEDGREGSVIPPWINLVSLEPSDRKRLHLNLEKRFDEMLVGGLLEEVKTLKANVALHADLPAIRSVGYRQVWEYLDGQTDWEEMRYKSLAATRQLGKRQLTWLRAMTGRNTFDPFNPNELKAALDFCKRNLV</sequence>
<dbReference type="EC" id="2.5.1.75" evidence="1"/>
<dbReference type="EMBL" id="CP000655">
    <property type="protein sequence ID" value="ABP34973.1"/>
    <property type="molecule type" value="Genomic_DNA"/>
</dbReference>
<dbReference type="RefSeq" id="WP_011903596.1">
    <property type="nucleotide sequence ID" value="NC_009379.1"/>
</dbReference>
<dbReference type="SMR" id="A4SZQ9"/>
<dbReference type="GeneID" id="31482149"/>
<dbReference type="KEGG" id="pnu:Pnuc_1760"/>
<dbReference type="eggNOG" id="COG0324">
    <property type="taxonomic scope" value="Bacteria"/>
</dbReference>
<dbReference type="HOGENOM" id="CLU_032616_0_0_4"/>
<dbReference type="Proteomes" id="UP000000231">
    <property type="component" value="Chromosome"/>
</dbReference>
<dbReference type="GO" id="GO:0005524">
    <property type="term" value="F:ATP binding"/>
    <property type="evidence" value="ECO:0007669"/>
    <property type="project" value="UniProtKB-UniRule"/>
</dbReference>
<dbReference type="GO" id="GO:0052381">
    <property type="term" value="F:tRNA dimethylallyltransferase activity"/>
    <property type="evidence" value="ECO:0007669"/>
    <property type="project" value="UniProtKB-UniRule"/>
</dbReference>
<dbReference type="GO" id="GO:0006400">
    <property type="term" value="P:tRNA modification"/>
    <property type="evidence" value="ECO:0007669"/>
    <property type="project" value="TreeGrafter"/>
</dbReference>
<dbReference type="FunFam" id="1.10.20.140:FF:000001">
    <property type="entry name" value="tRNA dimethylallyltransferase"/>
    <property type="match status" value="1"/>
</dbReference>
<dbReference type="Gene3D" id="1.10.20.140">
    <property type="match status" value="1"/>
</dbReference>
<dbReference type="Gene3D" id="3.40.50.300">
    <property type="entry name" value="P-loop containing nucleotide triphosphate hydrolases"/>
    <property type="match status" value="1"/>
</dbReference>
<dbReference type="HAMAP" id="MF_00185">
    <property type="entry name" value="IPP_trans"/>
    <property type="match status" value="1"/>
</dbReference>
<dbReference type="InterPro" id="IPR039657">
    <property type="entry name" value="Dimethylallyltransferase"/>
</dbReference>
<dbReference type="InterPro" id="IPR018022">
    <property type="entry name" value="IPT"/>
</dbReference>
<dbReference type="InterPro" id="IPR027417">
    <property type="entry name" value="P-loop_NTPase"/>
</dbReference>
<dbReference type="NCBIfam" id="TIGR00174">
    <property type="entry name" value="miaA"/>
    <property type="match status" value="1"/>
</dbReference>
<dbReference type="PANTHER" id="PTHR11088">
    <property type="entry name" value="TRNA DIMETHYLALLYLTRANSFERASE"/>
    <property type="match status" value="1"/>
</dbReference>
<dbReference type="PANTHER" id="PTHR11088:SF60">
    <property type="entry name" value="TRNA DIMETHYLALLYLTRANSFERASE"/>
    <property type="match status" value="1"/>
</dbReference>
<dbReference type="Pfam" id="PF01715">
    <property type="entry name" value="IPPT"/>
    <property type="match status" value="1"/>
</dbReference>
<dbReference type="SUPFAM" id="SSF52540">
    <property type="entry name" value="P-loop containing nucleoside triphosphate hydrolases"/>
    <property type="match status" value="1"/>
</dbReference>